<protein>
    <recommendedName>
        <fullName>Succinate dehydrogenase iron-sulfur subunit</fullName>
        <ecNumber>1.3.5.1</ecNumber>
    </recommendedName>
</protein>
<comment type="catalytic activity">
    <reaction>
        <text>a quinone + succinate = fumarate + a quinol</text>
        <dbReference type="Rhea" id="RHEA:40523"/>
        <dbReference type="ChEBI" id="CHEBI:24646"/>
        <dbReference type="ChEBI" id="CHEBI:29806"/>
        <dbReference type="ChEBI" id="CHEBI:30031"/>
        <dbReference type="ChEBI" id="CHEBI:132124"/>
        <dbReference type="EC" id="1.3.5.1"/>
    </reaction>
</comment>
<comment type="cofactor">
    <cofactor>
        <name>[2Fe-2S] cluster</name>
        <dbReference type="ChEBI" id="CHEBI:190135"/>
    </cofactor>
    <text>Binds 1 [2Fe-2S] cluster.</text>
</comment>
<comment type="cofactor">
    <cofactor>
        <name>[3Fe-4S] cluster</name>
        <dbReference type="ChEBI" id="CHEBI:21137"/>
    </cofactor>
    <text>Binds 1 [3Fe-4S] cluster.</text>
</comment>
<comment type="cofactor">
    <cofactor>
        <name>[4Fe-4S] cluster</name>
        <dbReference type="ChEBI" id="CHEBI:49883"/>
    </cofactor>
    <text>Binds 1 [4Fe-4S] cluster.</text>
</comment>
<comment type="pathway">
    <text>Carbohydrate metabolism; tricarboxylic acid cycle; fumarate from succinate (bacterial route): step 1/1.</text>
</comment>
<comment type="subunit">
    <text>Part of an enzyme complex containing four subunits: a flavoprotein, an iron-sulfur, cytochrome b-556, and a hydrophobic anchor protein.</text>
</comment>
<comment type="similarity">
    <text evidence="4">Belongs to the succinate dehydrogenase/fumarate reductase iron-sulfur protein family.</text>
</comment>
<accession>Q9ZEA1</accession>
<reference key="1">
    <citation type="journal article" date="1998" name="Nature">
        <title>The genome sequence of Rickettsia prowazekii and the origin of mitochondria.</title>
        <authorList>
            <person name="Andersson S.G.E."/>
            <person name="Zomorodipour A."/>
            <person name="Andersson J.O."/>
            <person name="Sicheritz-Ponten T."/>
            <person name="Alsmark U.C.M."/>
            <person name="Podowski R.M."/>
            <person name="Naeslund A.K."/>
            <person name="Eriksson A.-S."/>
            <person name="Winkler H.H."/>
            <person name="Kurland C.G."/>
        </authorList>
    </citation>
    <scope>NUCLEOTIDE SEQUENCE [LARGE SCALE GENOMIC DNA]</scope>
    <source>
        <strain>Madrid E</strain>
    </source>
</reference>
<dbReference type="EC" id="1.3.5.1"/>
<dbReference type="EMBL" id="AJ235270">
    <property type="protein sequence ID" value="CAA14515.1"/>
    <property type="molecule type" value="Genomic_DNA"/>
</dbReference>
<dbReference type="PIR" id="D71712">
    <property type="entry name" value="D71712"/>
</dbReference>
<dbReference type="RefSeq" id="NP_220438.1">
    <property type="nucleotide sequence ID" value="NC_000963.1"/>
</dbReference>
<dbReference type="RefSeq" id="WP_004596634.1">
    <property type="nucleotide sequence ID" value="NC_000963.1"/>
</dbReference>
<dbReference type="SMR" id="Q9ZEA1"/>
<dbReference type="STRING" id="272947.gene:17555127"/>
<dbReference type="EnsemblBacteria" id="CAA14515">
    <property type="protein sequence ID" value="CAA14515"/>
    <property type="gene ID" value="CAA14515"/>
</dbReference>
<dbReference type="KEGG" id="rpr:RP044"/>
<dbReference type="PATRIC" id="fig|272947.5.peg.45"/>
<dbReference type="eggNOG" id="COG0479">
    <property type="taxonomic scope" value="Bacteria"/>
</dbReference>
<dbReference type="HOGENOM" id="CLU_044838_0_2_5"/>
<dbReference type="OrthoDB" id="9804391at2"/>
<dbReference type="UniPathway" id="UPA00223">
    <property type="reaction ID" value="UER01005"/>
</dbReference>
<dbReference type="Proteomes" id="UP000002480">
    <property type="component" value="Chromosome"/>
</dbReference>
<dbReference type="GO" id="GO:0051537">
    <property type="term" value="F:2 iron, 2 sulfur cluster binding"/>
    <property type="evidence" value="ECO:0007669"/>
    <property type="project" value="UniProtKB-KW"/>
</dbReference>
<dbReference type="GO" id="GO:0051538">
    <property type="term" value="F:3 iron, 4 sulfur cluster binding"/>
    <property type="evidence" value="ECO:0007669"/>
    <property type="project" value="UniProtKB-KW"/>
</dbReference>
<dbReference type="GO" id="GO:0051539">
    <property type="term" value="F:4 iron, 4 sulfur cluster binding"/>
    <property type="evidence" value="ECO:0007669"/>
    <property type="project" value="UniProtKB-KW"/>
</dbReference>
<dbReference type="GO" id="GO:0009055">
    <property type="term" value="F:electron transfer activity"/>
    <property type="evidence" value="ECO:0007669"/>
    <property type="project" value="InterPro"/>
</dbReference>
<dbReference type="GO" id="GO:0046872">
    <property type="term" value="F:metal ion binding"/>
    <property type="evidence" value="ECO:0007669"/>
    <property type="project" value="UniProtKB-KW"/>
</dbReference>
<dbReference type="GO" id="GO:0008177">
    <property type="term" value="F:succinate dehydrogenase (quinone) activity"/>
    <property type="evidence" value="ECO:0007669"/>
    <property type="project" value="UniProtKB-EC"/>
</dbReference>
<dbReference type="GO" id="GO:0022904">
    <property type="term" value="P:respiratory electron transport chain"/>
    <property type="evidence" value="ECO:0007669"/>
    <property type="project" value="TreeGrafter"/>
</dbReference>
<dbReference type="GO" id="GO:0006099">
    <property type="term" value="P:tricarboxylic acid cycle"/>
    <property type="evidence" value="ECO:0007669"/>
    <property type="project" value="UniProtKB-UniPathway"/>
</dbReference>
<dbReference type="FunFam" id="3.10.20.30:FF:000007">
    <property type="entry name" value="Succinate dehydrogenase [ubiquinone] iron-sulfur subunit, mitochondrial"/>
    <property type="match status" value="1"/>
</dbReference>
<dbReference type="FunFam" id="1.10.1060.10:FF:000001">
    <property type="entry name" value="Succinate dehydrogenase iron-sulfur subunit SdhB"/>
    <property type="match status" value="1"/>
</dbReference>
<dbReference type="Gene3D" id="3.10.20.30">
    <property type="match status" value="1"/>
</dbReference>
<dbReference type="Gene3D" id="1.10.1060.10">
    <property type="entry name" value="Alpha-helical ferredoxin"/>
    <property type="match status" value="1"/>
</dbReference>
<dbReference type="InterPro" id="IPR036010">
    <property type="entry name" value="2Fe-2S_ferredoxin-like_sf"/>
</dbReference>
<dbReference type="InterPro" id="IPR001041">
    <property type="entry name" value="2Fe-2S_ferredoxin-type"/>
</dbReference>
<dbReference type="InterPro" id="IPR006058">
    <property type="entry name" value="2Fe2S_fd_BS"/>
</dbReference>
<dbReference type="InterPro" id="IPR017896">
    <property type="entry name" value="4Fe4S_Fe-S-bd"/>
</dbReference>
<dbReference type="InterPro" id="IPR017900">
    <property type="entry name" value="4Fe4S_Fe_S_CS"/>
</dbReference>
<dbReference type="InterPro" id="IPR012675">
    <property type="entry name" value="Beta-grasp_dom_sf"/>
</dbReference>
<dbReference type="InterPro" id="IPR009051">
    <property type="entry name" value="Helical_ferredxn"/>
</dbReference>
<dbReference type="InterPro" id="IPR050573">
    <property type="entry name" value="SDH/FRD_Iron-Sulfur"/>
</dbReference>
<dbReference type="InterPro" id="IPR004489">
    <property type="entry name" value="Succ_DH/fum_Rdtase_Fe-S"/>
</dbReference>
<dbReference type="InterPro" id="IPR025192">
    <property type="entry name" value="Succ_DH/fum_Rdtase_N"/>
</dbReference>
<dbReference type="NCBIfam" id="TIGR00384">
    <property type="entry name" value="dhsB"/>
    <property type="match status" value="1"/>
</dbReference>
<dbReference type="NCBIfam" id="NF004616">
    <property type="entry name" value="PRK05950.1"/>
    <property type="match status" value="1"/>
</dbReference>
<dbReference type="PANTHER" id="PTHR11921:SF29">
    <property type="entry name" value="SUCCINATE DEHYDROGENASE [UBIQUINONE] IRON-SULFUR SUBUNIT, MITOCHONDRIAL"/>
    <property type="match status" value="1"/>
</dbReference>
<dbReference type="PANTHER" id="PTHR11921">
    <property type="entry name" value="SUCCINATE DEHYDROGENASE IRON-SULFUR PROTEIN"/>
    <property type="match status" value="1"/>
</dbReference>
<dbReference type="Pfam" id="PF13085">
    <property type="entry name" value="Fer2_3"/>
    <property type="match status" value="1"/>
</dbReference>
<dbReference type="Pfam" id="PF13534">
    <property type="entry name" value="Fer4_17"/>
    <property type="match status" value="1"/>
</dbReference>
<dbReference type="SUPFAM" id="SSF54292">
    <property type="entry name" value="2Fe-2S ferredoxin-like"/>
    <property type="match status" value="1"/>
</dbReference>
<dbReference type="SUPFAM" id="SSF46548">
    <property type="entry name" value="alpha-helical ferredoxin"/>
    <property type="match status" value="1"/>
</dbReference>
<dbReference type="PROSITE" id="PS00197">
    <property type="entry name" value="2FE2S_FER_1"/>
    <property type="match status" value="1"/>
</dbReference>
<dbReference type="PROSITE" id="PS51085">
    <property type="entry name" value="2FE2S_FER_2"/>
    <property type="match status" value="1"/>
</dbReference>
<dbReference type="PROSITE" id="PS00198">
    <property type="entry name" value="4FE4S_FER_1"/>
    <property type="match status" value="1"/>
</dbReference>
<dbReference type="PROSITE" id="PS51379">
    <property type="entry name" value="4FE4S_FER_2"/>
    <property type="match status" value="1"/>
</dbReference>
<feature type="chain" id="PRO_0000158691" description="Succinate dehydrogenase iron-sulfur subunit">
    <location>
        <begin position="1"/>
        <end position="261"/>
    </location>
</feature>
<feature type="domain" description="2Fe-2S ferredoxin-type" evidence="2">
    <location>
        <begin position="28"/>
        <end position="119"/>
    </location>
</feature>
<feature type="domain" description="4Fe-4S ferredoxin-type" evidence="3">
    <location>
        <begin position="161"/>
        <end position="191"/>
    </location>
</feature>
<feature type="binding site" evidence="1">
    <location>
        <position position="80"/>
    </location>
    <ligand>
        <name>[2Fe-2S] cluster</name>
        <dbReference type="ChEBI" id="CHEBI:190135"/>
    </ligand>
</feature>
<feature type="binding site" evidence="1">
    <location>
        <position position="85"/>
    </location>
    <ligand>
        <name>[2Fe-2S] cluster</name>
        <dbReference type="ChEBI" id="CHEBI:190135"/>
    </ligand>
</feature>
<feature type="binding site" evidence="1">
    <location>
        <position position="100"/>
    </location>
    <ligand>
        <name>[2Fe-2S] cluster</name>
        <dbReference type="ChEBI" id="CHEBI:190135"/>
    </ligand>
</feature>
<feature type="binding site" evidence="1">
    <location>
        <position position="171"/>
    </location>
    <ligand>
        <name>[4Fe-4S] cluster</name>
        <dbReference type="ChEBI" id="CHEBI:49883"/>
    </ligand>
</feature>
<feature type="binding site" evidence="1">
    <location>
        <position position="174"/>
    </location>
    <ligand>
        <name>[4Fe-4S] cluster</name>
        <dbReference type="ChEBI" id="CHEBI:49883"/>
    </ligand>
</feature>
<feature type="binding site" evidence="1">
    <location>
        <position position="177"/>
    </location>
    <ligand>
        <name>[4Fe-4S] cluster</name>
        <dbReference type="ChEBI" id="CHEBI:49883"/>
    </ligand>
</feature>
<feature type="binding site" evidence="1">
    <location>
        <position position="181"/>
    </location>
    <ligand>
        <name>[3Fe-4S] cluster</name>
        <dbReference type="ChEBI" id="CHEBI:21137"/>
    </ligand>
</feature>
<feature type="binding site" evidence="1">
    <location>
        <position position="186"/>
    </location>
    <ligand>
        <name>a ubiquinone</name>
        <dbReference type="ChEBI" id="CHEBI:16389"/>
        <note>ligand shared with SdhD subunit</note>
    </ligand>
</feature>
<feature type="binding site" evidence="1">
    <location>
        <position position="228"/>
    </location>
    <ligand>
        <name>[3Fe-4S] cluster</name>
        <dbReference type="ChEBI" id="CHEBI:21137"/>
    </ligand>
</feature>
<feature type="binding site" evidence="1">
    <location>
        <position position="234"/>
    </location>
    <ligand>
        <name>[3Fe-4S] cluster</name>
        <dbReference type="ChEBI" id="CHEBI:21137"/>
    </ligand>
</feature>
<feature type="binding site" evidence="1">
    <location>
        <position position="238"/>
    </location>
    <ligand>
        <name>[4Fe-4S] cluster</name>
        <dbReference type="ChEBI" id="CHEBI:49883"/>
    </ligand>
</feature>
<sequence length="261" mass="29572">MVELRLPSNSVVKKGREHKAQQKMLKPRKVKVYRYDPDLDENPTIDSFEIDLSKTGPMVLDALIKIKNEIDSTLTFRRSCREGICGSCAMNIDGTNTLACIKPIEDISGDIKIYPLPHMKVVKDLVPDMSHFYAQYESIEPWLKNDSPAPSNSERLQSIKDREKLDGLYECILCACCSTSCPSYWWNGDKYLGPAILLQAYRWIADSRDDNTGARLEALEDPFKLYRCHTIMNCTKTCPKGLNPAKAIGRVKNLIAERHGV</sequence>
<gene>
    <name type="primary">sdhB</name>
    <name type="ordered locus">RP044</name>
</gene>
<evidence type="ECO:0000250" key="1"/>
<evidence type="ECO:0000255" key="2">
    <source>
        <dbReference type="PROSITE-ProRule" id="PRU00465"/>
    </source>
</evidence>
<evidence type="ECO:0000255" key="3">
    <source>
        <dbReference type="PROSITE-ProRule" id="PRU00711"/>
    </source>
</evidence>
<evidence type="ECO:0000305" key="4"/>
<name>SDHB_RICPR</name>
<keyword id="KW-0001">2Fe-2S</keyword>
<keyword id="KW-0003">3Fe-4S</keyword>
<keyword id="KW-0004">4Fe-4S</keyword>
<keyword id="KW-0249">Electron transport</keyword>
<keyword id="KW-0408">Iron</keyword>
<keyword id="KW-0411">Iron-sulfur</keyword>
<keyword id="KW-0479">Metal-binding</keyword>
<keyword id="KW-0560">Oxidoreductase</keyword>
<keyword id="KW-1185">Reference proteome</keyword>
<keyword id="KW-0813">Transport</keyword>
<keyword id="KW-0816">Tricarboxylic acid cycle</keyword>
<organism>
    <name type="scientific">Rickettsia prowazekii (strain Madrid E)</name>
    <dbReference type="NCBI Taxonomy" id="272947"/>
    <lineage>
        <taxon>Bacteria</taxon>
        <taxon>Pseudomonadati</taxon>
        <taxon>Pseudomonadota</taxon>
        <taxon>Alphaproteobacteria</taxon>
        <taxon>Rickettsiales</taxon>
        <taxon>Rickettsiaceae</taxon>
        <taxon>Rickettsieae</taxon>
        <taxon>Rickettsia</taxon>
        <taxon>typhus group</taxon>
    </lineage>
</organism>
<proteinExistence type="inferred from homology"/>